<name>PUM18_ARATH</name>
<reference key="1">
    <citation type="journal article" date="2000" name="DNA Res.">
        <title>Structural analysis of Arabidopsis thaliana chromosome 5. X. Sequence features of the regions of 3,076,755 bp covered by sixty P1 and TAC clones.</title>
        <authorList>
            <person name="Sato S."/>
            <person name="Nakamura Y."/>
            <person name="Kaneko T."/>
            <person name="Katoh T."/>
            <person name="Asamizu E."/>
            <person name="Kotani H."/>
            <person name="Tabata S."/>
        </authorList>
    </citation>
    <scope>NUCLEOTIDE SEQUENCE [LARGE SCALE GENOMIC DNA]</scope>
    <source>
        <strain>cv. Columbia</strain>
    </source>
</reference>
<reference key="2">
    <citation type="journal article" date="2017" name="Plant J.">
        <title>Araport11: a complete reannotation of the Arabidopsis thaliana reference genome.</title>
        <authorList>
            <person name="Cheng C.Y."/>
            <person name="Krishnakumar V."/>
            <person name="Chan A.P."/>
            <person name="Thibaud-Nissen F."/>
            <person name="Schobel S."/>
            <person name="Town C.D."/>
        </authorList>
    </citation>
    <scope>GENOME REANNOTATION</scope>
    <source>
        <strain>cv. Columbia</strain>
    </source>
</reference>
<reference key="3">
    <citation type="submission" date="2005-05" db="EMBL/GenBank/DDBJ databases">
        <authorList>
            <person name="Underwood B.A."/>
            <person name="Xiao Y.-L."/>
            <person name="Moskal W.A. Jr."/>
            <person name="Monaghan E.L."/>
            <person name="Wang W."/>
            <person name="Redman J.C."/>
            <person name="Wu H.C."/>
            <person name="Utterback T."/>
            <person name="Town C.D."/>
        </authorList>
    </citation>
    <scope>NUCLEOTIDE SEQUENCE [LARGE SCALE MRNA]</scope>
    <source>
        <strain>cv. Columbia</strain>
    </source>
</reference>
<reference key="4">
    <citation type="journal article" date="2009" name="FEBS J.">
        <title>Molecular characterization of Arabidopsis thaliana PUF proteins -- binding specificity and target candidates.</title>
        <authorList>
            <person name="Francischini C.W."/>
            <person name="Quaggio R.B."/>
        </authorList>
    </citation>
    <scope>GENE FAMILY</scope>
</reference>
<reference key="5">
    <citation type="journal article" date="2010" name="BMC Plant Biol.">
        <title>The Puf family of RNA-binding proteins in plants: phylogeny, structural modeling, activity and subcellular localization.</title>
        <authorList>
            <person name="Tam P.P."/>
            <person name="Barrette-Ng I.H."/>
            <person name="Simon D.M."/>
            <person name="Tam M.W."/>
            <person name="Ang A.L."/>
            <person name="Muench D.G."/>
        </authorList>
    </citation>
    <scope>GENE FAMILY</scope>
    <scope>SUBCELLULAR LOCATION</scope>
</reference>
<protein>
    <recommendedName>
        <fullName>Pumilio homolog 18</fullName>
        <shortName>APUM-18</shortName>
        <shortName>AtPUM18</shortName>
    </recommendedName>
</protein>
<keyword id="KW-0963">Cytoplasm</keyword>
<keyword id="KW-1185">Reference proteome</keyword>
<keyword id="KW-0677">Repeat</keyword>
<keyword id="KW-0694">RNA-binding</keyword>
<keyword id="KW-0810">Translation regulation</keyword>
<proteinExistence type="evidence at transcript level"/>
<evidence type="ECO:0000250" key="1"/>
<evidence type="ECO:0000255" key="2">
    <source>
        <dbReference type="PROSITE-ProRule" id="PRU00318"/>
    </source>
</evidence>
<evidence type="ECO:0000269" key="3">
    <source>
    </source>
</evidence>
<gene>
    <name type="primary">APUM18</name>
    <name type="ordered locus">At5g60110</name>
    <name type="ORF">MGO3.9</name>
</gene>
<comment type="function">
    <text evidence="1">Sequence-specific RNA-binding protein that regulates translation and mRNA stability by binding the 3'-UTR of target mRNAs.</text>
</comment>
<comment type="subcellular location">
    <subcellularLocation>
        <location evidence="3">Cytoplasm</location>
    </subcellularLocation>
</comment>
<comment type="domain">
    <text evidence="1">The pumilio repeats mediate the association with RNA by packing together to form a right-handed superhelix that approximates a half donut. The number as well as the specific sequence of the repeats determine the specificity for target mRNAs (By similarity).</text>
</comment>
<sequence length="327" mass="36838">MAVADNPFSMSTMFNALPNPKGISGSIPPPGFAPRASATPLHAALFNLMTDGDGVSYFKEMISNSDKTELQRMASLLTSDSDYFMSIVTTKFGSRRVQKLLGKSDDVDAFFCAAILRRFLHITTDKYASYVTIRAMVVFDKVMKKALYERILYHALDLACDQHGCIALNDIITDADDPYYRDQLLELVASNALRLSNDASGNFVVQHVLTLYDSRCIHNIAVNLYGQCIELSFKKYGSYIVEKLLEVEESMVVVVVELLGCDGDRLMRLARNEFGNFVVVKALRFTKMSRMDLFWGLVQKLMPFIRLLRRSHGSNIANILDSFRLRC</sequence>
<organism>
    <name type="scientific">Arabidopsis thaliana</name>
    <name type="common">Mouse-ear cress</name>
    <dbReference type="NCBI Taxonomy" id="3702"/>
    <lineage>
        <taxon>Eukaryota</taxon>
        <taxon>Viridiplantae</taxon>
        <taxon>Streptophyta</taxon>
        <taxon>Embryophyta</taxon>
        <taxon>Tracheophyta</taxon>
        <taxon>Spermatophyta</taxon>
        <taxon>Magnoliopsida</taxon>
        <taxon>eudicotyledons</taxon>
        <taxon>Gunneridae</taxon>
        <taxon>Pentapetalae</taxon>
        <taxon>rosids</taxon>
        <taxon>malvids</taxon>
        <taxon>Brassicales</taxon>
        <taxon>Brassicaceae</taxon>
        <taxon>Camelineae</taxon>
        <taxon>Arabidopsis</taxon>
    </lineage>
</organism>
<accession>Q9LVG3</accession>
<dbReference type="EMBL" id="AB019231">
    <property type="protein sequence ID" value="BAA96940.1"/>
    <property type="molecule type" value="Genomic_DNA"/>
</dbReference>
<dbReference type="EMBL" id="CP002688">
    <property type="protein sequence ID" value="AED97279.1"/>
    <property type="molecule type" value="Genomic_DNA"/>
</dbReference>
<dbReference type="EMBL" id="DQ056729">
    <property type="protein sequence ID" value="AAY78873.1"/>
    <property type="molecule type" value="mRNA"/>
</dbReference>
<dbReference type="RefSeq" id="NP_200819.1">
    <property type="nucleotide sequence ID" value="NM_125404.1"/>
</dbReference>
<dbReference type="SMR" id="Q9LVG3"/>
<dbReference type="STRING" id="3702.Q9LVG3"/>
<dbReference type="PaxDb" id="3702-AT5G60110.1"/>
<dbReference type="EnsemblPlants" id="AT5G60110.1">
    <property type="protein sequence ID" value="AT5G60110.1"/>
    <property type="gene ID" value="AT5G60110"/>
</dbReference>
<dbReference type="GeneID" id="836133"/>
<dbReference type="Gramene" id="AT5G60110.1">
    <property type="protein sequence ID" value="AT5G60110.1"/>
    <property type="gene ID" value="AT5G60110"/>
</dbReference>
<dbReference type="KEGG" id="ath:AT5G60110"/>
<dbReference type="Araport" id="AT5G60110"/>
<dbReference type="TAIR" id="AT5G60110">
    <property type="gene designation" value="PUM18"/>
</dbReference>
<dbReference type="eggNOG" id="KOG2049">
    <property type="taxonomic scope" value="Eukaryota"/>
</dbReference>
<dbReference type="HOGENOM" id="CLU_048501_0_0_1"/>
<dbReference type="InParanoid" id="Q9LVG3"/>
<dbReference type="OMA" id="SNMIFSW"/>
<dbReference type="PhylomeDB" id="Q9LVG3"/>
<dbReference type="PRO" id="PR:Q9LVG3"/>
<dbReference type="Proteomes" id="UP000006548">
    <property type="component" value="Chromosome 5"/>
</dbReference>
<dbReference type="ExpressionAtlas" id="Q9LVG3">
    <property type="expression patterns" value="baseline and differential"/>
</dbReference>
<dbReference type="GO" id="GO:0005737">
    <property type="term" value="C:cytoplasm"/>
    <property type="evidence" value="ECO:0000314"/>
    <property type="project" value="TAIR"/>
</dbReference>
<dbReference type="GO" id="GO:0003723">
    <property type="term" value="F:RNA binding"/>
    <property type="evidence" value="ECO:0007669"/>
    <property type="project" value="UniProtKB-KW"/>
</dbReference>
<dbReference type="GO" id="GO:0006417">
    <property type="term" value="P:regulation of translation"/>
    <property type="evidence" value="ECO:0007669"/>
    <property type="project" value="UniProtKB-KW"/>
</dbReference>
<dbReference type="Gene3D" id="1.25.10.10">
    <property type="entry name" value="Leucine-rich Repeat Variant"/>
    <property type="match status" value="1"/>
</dbReference>
<dbReference type="InterPro" id="IPR011989">
    <property type="entry name" value="ARM-like"/>
</dbReference>
<dbReference type="InterPro" id="IPR016024">
    <property type="entry name" value="ARM-type_fold"/>
</dbReference>
<dbReference type="InterPro" id="IPR033133">
    <property type="entry name" value="PUM-HD"/>
</dbReference>
<dbReference type="InterPro" id="IPR001313">
    <property type="entry name" value="Pumilio_RNA-bd_rpt"/>
</dbReference>
<dbReference type="PANTHER" id="PTHR12537:SF166">
    <property type="entry name" value="PUMILIO HOMOLOG 18-RELATED"/>
    <property type="match status" value="1"/>
</dbReference>
<dbReference type="PANTHER" id="PTHR12537">
    <property type="entry name" value="RNA BINDING PROTEIN PUMILIO-RELATED"/>
    <property type="match status" value="1"/>
</dbReference>
<dbReference type="Pfam" id="PF00806">
    <property type="entry name" value="PUF"/>
    <property type="match status" value="4"/>
</dbReference>
<dbReference type="SMART" id="SM00025">
    <property type="entry name" value="Pumilio"/>
    <property type="match status" value="6"/>
</dbReference>
<dbReference type="SUPFAM" id="SSF48371">
    <property type="entry name" value="ARM repeat"/>
    <property type="match status" value="1"/>
</dbReference>
<dbReference type="PROSITE" id="PS50302">
    <property type="entry name" value="PUM"/>
    <property type="match status" value="5"/>
</dbReference>
<dbReference type="PROSITE" id="PS50303">
    <property type="entry name" value="PUM_HD"/>
    <property type="match status" value="1"/>
</dbReference>
<feature type="chain" id="PRO_0000401400" description="Pumilio homolog 18">
    <location>
        <begin position="1"/>
        <end position="327"/>
    </location>
</feature>
<feature type="domain" description="PUM-HD" evidence="2">
    <location>
        <begin position="1"/>
        <end position="324"/>
    </location>
</feature>
<feature type="repeat" description="Pumilio 1">
    <location>
        <begin position="79"/>
        <end position="114"/>
    </location>
</feature>
<feature type="repeat" description="Pumilio 2">
    <location>
        <begin position="115"/>
        <end position="149"/>
    </location>
</feature>
<feature type="repeat" description="Pumilio 3">
    <location>
        <begin position="150"/>
        <end position="185"/>
    </location>
</feature>
<feature type="repeat" description="Pumilio 4">
    <location>
        <begin position="186"/>
        <end position="222"/>
    </location>
</feature>
<feature type="repeat" description="Pumilio 5">
    <location>
        <begin position="223"/>
        <end position="260"/>
    </location>
</feature>
<feature type="repeat" description="Pumilio 6">
    <location>
        <begin position="261"/>
        <end position="295"/>
    </location>
</feature>